<organism>
    <name type="scientific">Staphylococcus aureus (strain MW2)</name>
    <dbReference type="NCBI Taxonomy" id="196620"/>
    <lineage>
        <taxon>Bacteria</taxon>
        <taxon>Bacillati</taxon>
        <taxon>Bacillota</taxon>
        <taxon>Bacilli</taxon>
        <taxon>Bacillales</taxon>
        <taxon>Staphylococcaceae</taxon>
        <taxon>Staphylococcus</taxon>
    </lineage>
</organism>
<name>FOLD_STAAW</name>
<keyword id="KW-0028">Amino-acid biosynthesis</keyword>
<keyword id="KW-0368">Histidine biosynthesis</keyword>
<keyword id="KW-0378">Hydrolase</keyword>
<keyword id="KW-0486">Methionine biosynthesis</keyword>
<keyword id="KW-0511">Multifunctional enzyme</keyword>
<keyword id="KW-0521">NADP</keyword>
<keyword id="KW-0554">One-carbon metabolism</keyword>
<keyword id="KW-0560">Oxidoreductase</keyword>
<keyword id="KW-0658">Purine biosynthesis</keyword>
<reference key="1">
    <citation type="journal article" date="2002" name="Lancet">
        <title>Genome and virulence determinants of high virulence community-acquired MRSA.</title>
        <authorList>
            <person name="Baba T."/>
            <person name="Takeuchi F."/>
            <person name="Kuroda M."/>
            <person name="Yuzawa H."/>
            <person name="Aoki K."/>
            <person name="Oguchi A."/>
            <person name="Nagai Y."/>
            <person name="Iwama N."/>
            <person name="Asano K."/>
            <person name="Naimi T."/>
            <person name="Kuroda H."/>
            <person name="Cui L."/>
            <person name="Yamamoto K."/>
            <person name="Hiramatsu K."/>
        </authorList>
    </citation>
    <scope>NUCLEOTIDE SEQUENCE [LARGE SCALE GENOMIC DNA]</scope>
    <source>
        <strain>MW2</strain>
    </source>
</reference>
<comment type="function">
    <text evidence="1">Catalyzes the oxidation of 5,10-methylenetetrahydrofolate to 5,10-methenyltetrahydrofolate and then the hydrolysis of 5,10-methenyltetrahydrofolate to 10-formyltetrahydrofolate.</text>
</comment>
<comment type="catalytic activity">
    <reaction evidence="1">
        <text>(6R)-5,10-methylene-5,6,7,8-tetrahydrofolate + NADP(+) = (6R)-5,10-methenyltetrahydrofolate + NADPH</text>
        <dbReference type="Rhea" id="RHEA:22812"/>
        <dbReference type="ChEBI" id="CHEBI:15636"/>
        <dbReference type="ChEBI" id="CHEBI:57455"/>
        <dbReference type="ChEBI" id="CHEBI:57783"/>
        <dbReference type="ChEBI" id="CHEBI:58349"/>
        <dbReference type="EC" id="1.5.1.5"/>
    </reaction>
</comment>
<comment type="catalytic activity">
    <reaction evidence="1">
        <text>(6R)-5,10-methenyltetrahydrofolate + H2O = (6R)-10-formyltetrahydrofolate + H(+)</text>
        <dbReference type="Rhea" id="RHEA:23700"/>
        <dbReference type="ChEBI" id="CHEBI:15377"/>
        <dbReference type="ChEBI" id="CHEBI:15378"/>
        <dbReference type="ChEBI" id="CHEBI:57455"/>
        <dbReference type="ChEBI" id="CHEBI:195366"/>
        <dbReference type="EC" id="3.5.4.9"/>
    </reaction>
</comment>
<comment type="pathway">
    <text evidence="1">One-carbon metabolism; tetrahydrofolate interconversion.</text>
</comment>
<comment type="subunit">
    <text evidence="1">Homodimer.</text>
</comment>
<comment type="similarity">
    <text evidence="1">Belongs to the tetrahydrofolate dehydrogenase/cyclohydrolase family.</text>
</comment>
<proteinExistence type="inferred from homology"/>
<dbReference type="EC" id="1.5.1.5" evidence="1"/>
<dbReference type="EC" id="3.5.4.9" evidence="1"/>
<dbReference type="EMBL" id="BA000033">
    <property type="protein sequence ID" value="BAB94811.1"/>
    <property type="molecule type" value="Genomic_DNA"/>
</dbReference>
<dbReference type="RefSeq" id="WP_000225837.1">
    <property type="nucleotide sequence ID" value="NC_003923.1"/>
</dbReference>
<dbReference type="SMR" id="Q8NX95"/>
<dbReference type="KEGG" id="sam:MW0946"/>
<dbReference type="HOGENOM" id="CLU_034045_2_1_9"/>
<dbReference type="UniPathway" id="UPA00193"/>
<dbReference type="GO" id="GO:0005829">
    <property type="term" value="C:cytosol"/>
    <property type="evidence" value="ECO:0007669"/>
    <property type="project" value="TreeGrafter"/>
</dbReference>
<dbReference type="GO" id="GO:0004477">
    <property type="term" value="F:methenyltetrahydrofolate cyclohydrolase activity"/>
    <property type="evidence" value="ECO:0007669"/>
    <property type="project" value="UniProtKB-UniRule"/>
</dbReference>
<dbReference type="GO" id="GO:0004488">
    <property type="term" value="F:methylenetetrahydrofolate dehydrogenase (NADP+) activity"/>
    <property type="evidence" value="ECO:0007669"/>
    <property type="project" value="UniProtKB-UniRule"/>
</dbReference>
<dbReference type="GO" id="GO:0000105">
    <property type="term" value="P:L-histidine biosynthetic process"/>
    <property type="evidence" value="ECO:0007669"/>
    <property type="project" value="UniProtKB-KW"/>
</dbReference>
<dbReference type="GO" id="GO:0009086">
    <property type="term" value="P:methionine biosynthetic process"/>
    <property type="evidence" value="ECO:0007669"/>
    <property type="project" value="UniProtKB-KW"/>
</dbReference>
<dbReference type="GO" id="GO:0006164">
    <property type="term" value="P:purine nucleotide biosynthetic process"/>
    <property type="evidence" value="ECO:0007669"/>
    <property type="project" value="UniProtKB-KW"/>
</dbReference>
<dbReference type="GO" id="GO:0035999">
    <property type="term" value="P:tetrahydrofolate interconversion"/>
    <property type="evidence" value="ECO:0007669"/>
    <property type="project" value="UniProtKB-UniRule"/>
</dbReference>
<dbReference type="CDD" id="cd01080">
    <property type="entry name" value="NAD_bind_m-THF_DH_Cyclohyd"/>
    <property type="match status" value="1"/>
</dbReference>
<dbReference type="FunFam" id="3.40.50.10860:FF:000001">
    <property type="entry name" value="Bifunctional protein FolD"/>
    <property type="match status" value="1"/>
</dbReference>
<dbReference type="FunFam" id="3.40.50.720:FF:000094">
    <property type="entry name" value="Bifunctional protein FolD"/>
    <property type="match status" value="1"/>
</dbReference>
<dbReference type="Gene3D" id="3.40.50.10860">
    <property type="entry name" value="Leucine Dehydrogenase, chain A, domain 1"/>
    <property type="match status" value="1"/>
</dbReference>
<dbReference type="Gene3D" id="3.40.50.720">
    <property type="entry name" value="NAD(P)-binding Rossmann-like Domain"/>
    <property type="match status" value="1"/>
</dbReference>
<dbReference type="HAMAP" id="MF_01576">
    <property type="entry name" value="THF_DHG_CYH"/>
    <property type="match status" value="1"/>
</dbReference>
<dbReference type="InterPro" id="IPR046346">
    <property type="entry name" value="Aminoacid_DH-like_N_sf"/>
</dbReference>
<dbReference type="InterPro" id="IPR036291">
    <property type="entry name" value="NAD(P)-bd_dom_sf"/>
</dbReference>
<dbReference type="InterPro" id="IPR000672">
    <property type="entry name" value="THF_DH/CycHdrlase"/>
</dbReference>
<dbReference type="InterPro" id="IPR020630">
    <property type="entry name" value="THF_DH/CycHdrlase_cat_dom"/>
</dbReference>
<dbReference type="InterPro" id="IPR020631">
    <property type="entry name" value="THF_DH/CycHdrlase_NAD-bd_dom"/>
</dbReference>
<dbReference type="NCBIfam" id="NF010772">
    <property type="entry name" value="PRK14175.1"/>
    <property type="match status" value="1"/>
</dbReference>
<dbReference type="PANTHER" id="PTHR48099:SF5">
    <property type="entry name" value="C-1-TETRAHYDROFOLATE SYNTHASE, CYTOPLASMIC"/>
    <property type="match status" value="1"/>
</dbReference>
<dbReference type="PANTHER" id="PTHR48099">
    <property type="entry name" value="C-1-TETRAHYDROFOLATE SYNTHASE, CYTOPLASMIC-RELATED"/>
    <property type="match status" value="1"/>
</dbReference>
<dbReference type="Pfam" id="PF00763">
    <property type="entry name" value="THF_DHG_CYH"/>
    <property type="match status" value="1"/>
</dbReference>
<dbReference type="Pfam" id="PF02882">
    <property type="entry name" value="THF_DHG_CYH_C"/>
    <property type="match status" value="1"/>
</dbReference>
<dbReference type="PRINTS" id="PR00085">
    <property type="entry name" value="THFDHDRGNASE"/>
</dbReference>
<dbReference type="SUPFAM" id="SSF53223">
    <property type="entry name" value="Aminoacid dehydrogenase-like, N-terminal domain"/>
    <property type="match status" value="1"/>
</dbReference>
<dbReference type="SUPFAM" id="SSF51735">
    <property type="entry name" value="NAD(P)-binding Rossmann-fold domains"/>
    <property type="match status" value="1"/>
</dbReference>
<feature type="chain" id="PRO_0000265950" description="Bifunctional protein FolD">
    <location>
        <begin position="1"/>
        <end position="286"/>
    </location>
</feature>
<feature type="binding site" evidence="1">
    <location>
        <begin position="165"/>
        <end position="167"/>
    </location>
    <ligand>
        <name>NADP(+)</name>
        <dbReference type="ChEBI" id="CHEBI:58349"/>
    </ligand>
</feature>
<feature type="binding site" evidence="1">
    <location>
        <position position="190"/>
    </location>
    <ligand>
        <name>NADP(+)</name>
        <dbReference type="ChEBI" id="CHEBI:58349"/>
    </ligand>
</feature>
<gene>
    <name evidence="1" type="primary">folD</name>
    <name type="ordered locus">MW0946</name>
</gene>
<accession>Q8NX95</accession>
<protein>
    <recommendedName>
        <fullName evidence="1">Bifunctional protein FolD</fullName>
    </recommendedName>
    <domain>
        <recommendedName>
            <fullName evidence="1">Methylenetetrahydrofolate dehydrogenase</fullName>
            <ecNumber evidence="1">1.5.1.5</ecNumber>
        </recommendedName>
    </domain>
    <domain>
        <recommendedName>
            <fullName evidence="1">Methenyltetrahydrofolate cyclohydrolase</fullName>
            <ecNumber evidence="1">3.5.4.9</ecNumber>
        </recommendedName>
    </domain>
</protein>
<evidence type="ECO:0000255" key="1">
    <source>
        <dbReference type="HAMAP-Rule" id="MF_01576"/>
    </source>
</evidence>
<sequence length="286" mass="30844">MVAKILDGKQIAKDYRQGLQDQVEALKEKGFTPKLSVILVGNDGASQSYVRSKKKAAEKIGMISEIVHLEETATEEEVLNELNRLNNDDSVSGILVQVPLPKQVSEQKILEAINPEKDVDGFHPINIGKLYIDEQTFVPCTPLGIMEILKHADIDLEGKNAVVIGRSHIVGQPVSKLLLQKNASVTILHSRSKDMASYLKDADVIVSAVGKPGLVTKDVVKEGAVIIDVGNTPDENGKLKGDVDYDAVKEIAGAITPVPGGVGPLTITMVLNNTLLAEKMRRGIDS</sequence>